<comment type="catalytic activity">
    <reaction evidence="1">
        <text>gamma-L-glutamyl-L-cysteine + glycine + ATP = glutathione + ADP + phosphate + H(+)</text>
        <dbReference type="Rhea" id="RHEA:13557"/>
        <dbReference type="ChEBI" id="CHEBI:15378"/>
        <dbReference type="ChEBI" id="CHEBI:30616"/>
        <dbReference type="ChEBI" id="CHEBI:43474"/>
        <dbReference type="ChEBI" id="CHEBI:57305"/>
        <dbReference type="ChEBI" id="CHEBI:57925"/>
        <dbReference type="ChEBI" id="CHEBI:58173"/>
        <dbReference type="ChEBI" id="CHEBI:456216"/>
        <dbReference type="EC" id="6.3.2.3"/>
    </reaction>
</comment>
<comment type="cofactor">
    <cofactor evidence="1">
        <name>Mg(2+)</name>
        <dbReference type="ChEBI" id="CHEBI:18420"/>
    </cofactor>
    <cofactor evidence="1">
        <name>Mn(2+)</name>
        <dbReference type="ChEBI" id="CHEBI:29035"/>
    </cofactor>
    <text evidence="1">Binds 1 magnesium or manganese ion per subunit.</text>
</comment>
<comment type="pathway">
    <text evidence="1">Sulfur metabolism; glutathione biosynthesis; glutathione from L-cysteine and L-glutamate: step 2/2.</text>
</comment>
<comment type="similarity">
    <text evidence="1">Belongs to the prokaryotic GSH synthase family.</text>
</comment>
<sequence>MIKLGIVMDPIANINIKKDSSFAMLLEAQRRGYELHYMEMADLYLINGEARARTRTLSVEQNYDKWYEFTGEQDLPLADLDVILMRKDPPFDTEFIYATYILERAEEKGTLIVNKPQSLRDCNEKLFTAWFSDLTPETLVTRNKAQLKAFWEKHSDIILKPLDGMGGASIFRVKEGDPNLGVIAETLTEHGTRYCMAQNYLPAIKDGDKRVLVVDGEPVPYCLARIPQGGETRGNLAAGGRGEPRPLTESDWKIARQIGPTLKEKGLIFVGLDIIGDRLTEINVTSPTCIREIEAEFPVSITGMLMDAIEARLQQQ</sequence>
<organism>
    <name type="scientific">Escherichia coli O127:H6 (strain E2348/69 / EPEC)</name>
    <dbReference type="NCBI Taxonomy" id="574521"/>
    <lineage>
        <taxon>Bacteria</taxon>
        <taxon>Pseudomonadati</taxon>
        <taxon>Pseudomonadota</taxon>
        <taxon>Gammaproteobacteria</taxon>
        <taxon>Enterobacterales</taxon>
        <taxon>Enterobacteriaceae</taxon>
        <taxon>Escherichia</taxon>
    </lineage>
</organism>
<accession>B7UHZ4</accession>
<proteinExistence type="evidence at protein level"/>
<dbReference type="EC" id="6.3.2.3" evidence="1"/>
<dbReference type="EMBL" id="FM180568">
    <property type="protein sequence ID" value="CAS10748.1"/>
    <property type="molecule type" value="Genomic_DNA"/>
</dbReference>
<dbReference type="RefSeq" id="WP_000593260.1">
    <property type="nucleotide sequence ID" value="NC_011601.1"/>
</dbReference>
<dbReference type="SMR" id="B7UHZ4"/>
<dbReference type="GlyCosmos" id="B7UHZ4">
    <property type="glycosylation" value="1 site, No reported glycans"/>
</dbReference>
<dbReference type="KEGG" id="ecg:E2348C_3200"/>
<dbReference type="HOGENOM" id="CLU_068239_0_0_6"/>
<dbReference type="UniPathway" id="UPA00142">
    <property type="reaction ID" value="UER00210"/>
</dbReference>
<dbReference type="Proteomes" id="UP000008205">
    <property type="component" value="Chromosome"/>
</dbReference>
<dbReference type="GO" id="GO:0005737">
    <property type="term" value="C:cytoplasm"/>
    <property type="evidence" value="ECO:0007669"/>
    <property type="project" value="TreeGrafter"/>
</dbReference>
<dbReference type="GO" id="GO:0005524">
    <property type="term" value="F:ATP binding"/>
    <property type="evidence" value="ECO:0007669"/>
    <property type="project" value="UniProtKB-UniRule"/>
</dbReference>
<dbReference type="GO" id="GO:0004363">
    <property type="term" value="F:glutathione synthase activity"/>
    <property type="evidence" value="ECO:0007669"/>
    <property type="project" value="UniProtKB-UniRule"/>
</dbReference>
<dbReference type="GO" id="GO:0046872">
    <property type="term" value="F:metal ion binding"/>
    <property type="evidence" value="ECO:0007669"/>
    <property type="project" value="UniProtKB-KW"/>
</dbReference>
<dbReference type="FunFam" id="3.30.1490.20:FF:000009">
    <property type="entry name" value="Glutathione synthetase"/>
    <property type="match status" value="1"/>
</dbReference>
<dbReference type="FunFam" id="3.30.470.20:FF:000010">
    <property type="entry name" value="Glutathione synthetase"/>
    <property type="match status" value="1"/>
</dbReference>
<dbReference type="FunFam" id="3.40.50.20:FF:000009">
    <property type="entry name" value="Glutathione synthetase"/>
    <property type="match status" value="1"/>
</dbReference>
<dbReference type="Gene3D" id="3.40.50.20">
    <property type="match status" value="1"/>
</dbReference>
<dbReference type="Gene3D" id="3.30.1490.20">
    <property type="entry name" value="ATP-grasp fold, A domain"/>
    <property type="match status" value="1"/>
</dbReference>
<dbReference type="Gene3D" id="3.30.470.20">
    <property type="entry name" value="ATP-grasp fold, B domain"/>
    <property type="match status" value="1"/>
</dbReference>
<dbReference type="HAMAP" id="MF_00162">
    <property type="entry name" value="GSH_S"/>
    <property type="match status" value="1"/>
</dbReference>
<dbReference type="InterPro" id="IPR011761">
    <property type="entry name" value="ATP-grasp"/>
</dbReference>
<dbReference type="InterPro" id="IPR013815">
    <property type="entry name" value="ATP_grasp_subdomain_1"/>
</dbReference>
<dbReference type="InterPro" id="IPR006284">
    <property type="entry name" value="Glut_synth_pro"/>
</dbReference>
<dbReference type="InterPro" id="IPR004218">
    <property type="entry name" value="GSHS_ATP-bd"/>
</dbReference>
<dbReference type="InterPro" id="IPR004215">
    <property type="entry name" value="GSHS_N"/>
</dbReference>
<dbReference type="InterPro" id="IPR016185">
    <property type="entry name" value="PreATP-grasp_dom_sf"/>
</dbReference>
<dbReference type="NCBIfam" id="TIGR01380">
    <property type="entry name" value="glut_syn"/>
    <property type="match status" value="1"/>
</dbReference>
<dbReference type="NCBIfam" id="NF003573">
    <property type="entry name" value="PRK05246.1"/>
    <property type="match status" value="1"/>
</dbReference>
<dbReference type="PANTHER" id="PTHR21621:SF4">
    <property type="entry name" value="GLUTATHIONE SYNTHETASE"/>
    <property type="match status" value="1"/>
</dbReference>
<dbReference type="PANTHER" id="PTHR21621">
    <property type="entry name" value="RIBOSOMAL PROTEIN S6 MODIFICATION PROTEIN"/>
    <property type="match status" value="1"/>
</dbReference>
<dbReference type="Pfam" id="PF02955">
    <property type="entry name" value="GSH-S_ATP"/>
    <property type="match status" value="1"/>
</dbReference>
<dbReference type="Pfam" id="PF02951">
    <property type="entry name" value="GSH-S_N"/>
    <property type="match status" value="1"/>
</dbReference>
<dbReference type="SUPFAM" id="SSF56059">
    <property type="entry name" value="Glutathione synthetase ATP-binding domain-like"/>
    <property type="match status" value="1"/>
</dbReference>
<dbReference type="SUPFAM" id="SSF52440">
    <property type="entry name" value="PreATP-grasp domain"/>
    <property type="match status" value="1"/>
</dbReference>
<dbReference type="PROSITE" id="PS50975">
    <property type="entry name" value="ATP_GRASP"/>
    <property type="match status" value="1"/>
</dbReference>
<reference key="1">
    <citation type="journal article" date="2009" name="J. Bacteriol.">
        <title>Complete genome sequence and comparative genome analysis of enteropathogenic Escherichia coli O127:H6 strain E2348/69.</title>
        <authorList>
            <person name="Iguchi A."/>
            <person name="Thomson N.R."/>
            <person name="Ogura Y."/>
            <person name="Saunders D."/>
            <person name="Ooka T."/>
            <person name="Henderson I.R."/>
            <person name="Harris D."/>
            <person name="Asadulghani M."/>
            <person name="Kurokawa K."/>
            <person name="Dean P."/>
            <person name="Kenny B."/>
            <person name="Quail M.A."/>
            <person name="Thurston S."/>
            <person name="Dougan G."/>
            <person name="Hayashi T."/>
            <person name="Parkhill J."/>
            <person name="Frankel G."/>
        </authorList>
    </citation>
    <scope>NUCLEOTIDE SEQUENCE [LARGE SCALE GENOMIC DNA]</scope>
    <source>
        <strain evidence="4">E2348/69 / EPEC</strain>
    </source>
</reference>
<reference key="2">
    <citation type="journal article" date="2020" name="Sci. Rep.">
        <title>An intra-bacterial activity for a T3SS effector.</title>
        <authorList>
            <person name="El Qaidi S."/>
            <person name="Scott N.E."/>
            <person name="Hays M.P."/>
            <person name="Geisbrecht B.V."/>
            <person name="Watkins S."/>
            <person name="Hardwidge P.R."/>
        </authorList>
    </citation>
    <scope>GLYCOSYLATION AT ARG-256</scope>
</reference>
<feature type="chain" id="PRO_0000452589" description="Glutathione synthetase">
    <location>
        <begin position="1"/>
        <end position="316"/>
    </location>
</feature>
<feature type="domain" description="ATP-grasp" evidence="1">
    <location>
        <begin position="125"/>
        <end position="310"/>
    </location>
</feature>
<feature type="binding site" evidence="1">
    <location>
        <position position="281"/>
    </location>
    <ligand>
        <name>Mg(2+)</name>
        <dbReference type="ChEBI" id="CHEBI:18420"/>
    </ligand>
</feature>
<feature type="binding site" evidence="1">
    <location>
        <position position="283"/>
    </location>
    <ligand>
        <name>Mg(2+)</name>
        <dbReference type="ChEBI" id="CHEBI:18420"/>
    </ligand>
</feature>
<feature type="glycosylation site" description="N-beta-linked (GlcNAc) arginine" evidence="2">
    <location>
        <position position="256"/>
    </location>
</feature>
<keyword id="KW-0067">ATP-binding</keyword>
<keyword id="KW-0317">Glutathione biosynthesis</keyword>
<keyword id="KW-0325">Glycoprotein</keyword>
<keyword id="KW-0436">Ligase</keyword>
<keyword id="KW-0460">Magnesium</keyword>
<keyword id="KW-0464">Manganese</keyword>
<keyword id="KW-0479">Metal-binding</keyword>
<keyword id="KW-0547">Nucleotide-binding</keyword>
<keyword id="KW-1185">Reference proteome</keyword>
<protein>
    <recommendedName>
        <fullName evidence="1">Glutathione synthetase</fullName>
        <ecNumber evidence="1">6.3.2.3</ecNumber>
    </recommendedName>
    <alternativeName>
        <fullName evidence="1">GSH synthetase</fullName>
        <shortName evidence="1">GSH-S</shortName>
        <shortName evidence="1">GSHase</shortName>
    </alternativeName>
    <alternativeName>
        <fullName evidence="1">Glutathione synthase</fullName>
    </alternativeName>
</protein>
<gene>
    <name evidence="1 3" type="primary">gshB</name>
    <name type="ordered locus">E2348C_3200</name>
</gene>
<evidence type="ECO:0000255" key="1">
    <source>
        <dbReference type="HAMAP-Rule" id="MF_00162"/>
    </source>
</evidence>
<evidence type="ECO:0000269" key="2">
    <source>
    </source>
</evidence>
<evidence type="ECO:0000303" key="3">
    <source>
    </source>
</evidence>
<evidence type="ECO:0000312" key="4">
    <source>
        <dbReference type="Proteomes" id="UP000008205"/>
    </source>
</evidence>
<name>GSHB_ECO27</name>